<gene>
    <name type="ordered locus">MT3512</name>
</gene>
<protein>
    <recommendedName>
        <fullName evidence="1">dTDP-4-amino-4,6-dideoxyglucose formyltransferase</fullName>
        <shortName evidence="1">dTDP-Qui4N formyltransferase</shortName>
        <ecNumber evidence="1">2.1.2.-</ecNumber>
    </recommendedName>
    <alternativeName>
        <fullName evidence="2">Sugar N-formyltransferase MT3512</fullName>
    </alternativeName>
</protein>
<feature type="chain" id="PRO_0000427569" description="dTDP-4-amino-4,6-dideoxyglucose formyltransferase">
    <location>
        <begin position="1"/>
        <end position="234"/>
    </location>
</feature>
<feature type="active site" description="Proton acceptor" evidence="1">
    <location>
        <position position="81"/>
    </location>
</feature>
<feature type="binding site" evidence="1">
    <location>
        <position position="9"/>
    </location>
    <ligand>
        <name>dTDP-4-amino-4,6-dideoxy-alpha-D-glucose</name>
        <dbReference type="ChEBI" id="CHEBI:68501"/>
    </ligand>
</feature>
<feature type="binding site" evidence="1">
    <location>
        <begin position="62"/>
        <end position="64"/>
    </location>
    <ligand>
        <name>dTDP-4-amino-4,6-dideoxy-alpha-D-glucose</name>
        <dbReference type="ChEBI" id="CHEBI:68501"/>
    </ligand>
</feature>
<feature type="binding site" evidence="1">
    <location>
        <begin position="65"/>
        <end position="67"/>
    </location>
    <ligand>
        <name>(6R)-10-formyltetrahydrofolate</name>
        <dbReference type="ChEBI" id="CHEBI:195366"/>
    </ligand>
</feature>
<feature type="binding site" evidence="1">
    <location>
        <begin position="90"/>
        <end position="94"/>
    </location>
    <ligand>
        <name>dTDP-4-amino-4,6-dideoxy-alpha-D-glucose</name>
        <dbReference type="ChEBI" id="CHEBI:68501"/>
    </ligand>
</feature>
<feature type="binding site" evidence="1">
    <location>
        <position position="112"/>
    </location>
    <ligand>
        <name>(6R)-10-formyltetrahydrofolate</name>
        <dbReference type="ChEBI" id="CHEBI:195366"/>
    </ligand>
</feature>
<feature type="binding site" evidence="1">
    <location>
        <position position="116"/>
    </location>
    <ligand>
        <name>(6R)-10-formyltetrahydrofolate</name>
        <dbReference type="ChEBI" id="CHEBI:195366"/>
    </ligand>
</feature>
<feature type="binding site" evidence="1">
    <location>
        <position position="175"/>
    </location>
    <ligand>
        <name>(6R)-10-formyltetrahydrofolate</name>
        <dbReference type="ChEBI" id="CHEBI:195366"/>
    </ligand>
</feature>
<feature type="binding site" evidence="1">
    <location>
        <position position="209"/>
    </location>
    <ligand>
        <name>dTDP-4-amino-4,6-dideoxy-alpha-D-glucose</name>
        <dbReference type="ChEBI" id="CHEBI:68501"/>
    </ligand>
</feature>
<accession>P9WKZ2</accession>
<accession>L0TFA5</accession>
<accession>P65073</accession>
<accession>Q50721</accession>
<reference key="1">
    <citation type="journal article" date="2002" name="J. Bacteriol.">
        <title>Whole-genome comparison of Mycobacterium tuberculosis clinical and laboratory strains.</title>
        <authorList>
            <person name="Fleischmann R.D."/>
            <person name="Alland D."/>
            <person name="Eisen J.A."/>
            <person name="Carpenter L."/>
            <person name="White O."/>
            <person name="Peterson J.D."/>
            <person name="DeBoy R.T."/>
            <person name="Dodson R.J."/>
            <person name="Gwinn M.L."/>
            <person name="Haft D.H."/>
            <person name="Hickey E.K."/>
            <person name="Kolonay J.F."/>
            <person name="Nelson W.C."/>
            <person name="Umayam L.A."/>
            <person name="Ermolaeva M.D."/>
            <person name="Salzberg S.L."/>
            <person name="Delcher A."/>
            <person name="Utterback T.R."/>
            <person name="Weidman J.F."/>
            <person name="Khouri H.M."/>
            <person name="Gill J."/>
            <person name="Mikula A."/>
            <person name="Bishai W."/>
            <person name="Jacobs W.R. Jr."/>
            <person name="Venter J.C."/>
            <person name="Fraser C.M."/>
        </authorList>
    </citation>
    <scope>NUCLEOTIDE SEQUENCE [LARGE SCALE GENOMIC DNA]</scope>
    <source>
        <strain>CDC 1551 / Oshkosh</strain>
    </source>
</reference>
<name>SUGFT_MYCTO</name>
<organism>
    <name type="scientific">Mycobacterium tuberculosis (strain CDC 1551 / Oshkosh)</name>
    <dbReference type="NCBI Taxonomy" id="83331"/>
    <lineage>
        <taxon>Bacteria</taxon>
        <taxon>Bacillati</taxon>
        <taxon>Actinomycetota</taxon>
        <taxon>Actinomycetes</taxon>
        <taxon>Mycobacteriales</taxon>
        <taxon>Mycobacteriaceae</taxon>
        <taxon>Mycobacterium</taxon>
        <taxon>Mycobacterium tuberculosis complex</taxon>
    </lineage>
</organism>
<proteinExistence type="inferred from homology"/>
<comment type="function">
    <text evidence="1">Sugar N-formyltransferase that catalyzes the conversion of dTDP-4-amino-4,6-dideoxyglucose into dTDP-4-formamido-4,6-dideoxyglucose using N(10)-formyltetrahydrofolate as the carbon source. Plays a role in virulence.</text>
</comment>
<comment type="catalytic activity">
    <reaction evidence="1">
        <text>dTDP-4-amino-4,6-dideoxy-alpha-D-glucose + (6R)-10-formyltetrahydrofolate = dTDP-4-formamido-4,6-dideoxy-alpha-D-glucose + (6S)-5,6,7,8-tetrahydrofolate + H(+)</text>
        <dbReference type="Rhea" id="RHEA:54032"/>
        <dbReference type="ChEBI" id="CHEBI:15378"/>
        <dbReference type="ChEBI" id="CHEBI:57453"/>
        <dbReference type="ChEBI" id="CHEBI:68501"/>
        <dbReference type="ChEBI" id="CHEBI:138034"/>
        <dbReference type="ChEBI" id="CHEBI:195366"/>
    </reaction>
</comment>
<comment type="subunit">
    <text evidence="1">Homodimer.</text>
</comment>
<comment type="similarity">
    <text evidence="2">Belongs to the dTDP-Qui4N formyltransferase family.</text>
</comment>
<evidence type="ECO:0000250" key="1">
    <source>
        <dbReference type="UniProtKB" id="P9WKZ3"/>
    </source>
</evidence>
<evidence type="ECO:0000305" key="2"/>
<keyword id="KW-0119">Carbohydrate metabolism</keyword>
<keyword id="KW-1185">Reference proteome</keyword>
<keyword id="KW-0808">Transferase</keyword>
<sequence length="234" mass="26515">MTILILTDNVHAHALAVDLQARHGDMDVYQSPIGQLPGVPRCDVAERVAEIVERYDLVLSFHCKQRFPAALIDGVRCVNVHPGFNPYNRGWFPQVFSIIDGQKVGVTIHEIDDQLDHGPIIAQRECAIESWDSSGSVYARLMDIERELVLEHFDAIRDGSYTAKSPATEGNLNLKKDFEQLRRLDLNERGTFGHFLNRLRALTHDDFRNAWFVDASGRKVFVRVVLEPEKPAEA</sequence>
<dbReference type="EC" id="2.1.2.-" evidence="1"/>
<dbReference type="EMBL" id="AE000516">
    <property type="protein sequence ID" value="AAK47850.1"/>
    <property type="molecule type" value="Genomic_DNA"/>
</dbReference>
<dbReference type="PIR" id="A70736">
    <property type="entry name" value="A70736"/>
</dbReference>
<dbReference type="RefSeq" id="WP_003417980.1">
    <property type="nucleotide sequence ID" value="NZ_KK341227.1"/>
</dbReference>
<dbReference type="SMR" id="P9WKZ2"/>
<dbReference type="KEGG" id="mtc:MT3512"/>
<dbReference type="PATRIC" id="fig|83331.31.peg.3770"/>
<dbReference type="HOGENOM" id="CLU_096083_0_0_11"/>
<dbReference type="Proteomes" id="UP000001020">
    <property type="component" value="Chromosome"/>
</dbReference>
<dbReference type="GO" id="GO:0005829">
    <property type="term" value="C:cytosol"/>
    <property type="evidence" value="ECO:0007669"/>
    <property type="project" value="TreeGrafter"/>
</dbReference>
<dbReference type="GO" id="GO:0004479">
    <property type="term" value="F:methionyl-tRNA formyltransferase activity"/>
    <property type="evidence" value="ECO:0007669"/>
    <property type="project" value="TreeGrafter"/>
</dbReference>
<dbReference type="Gene3D" id="3.40.50.170">
    <property type="entry name" value="Formyl transferase, N-terminal domain"/>
    <property type="match status" value="1"/>
</dbReference>
<dbReference type="InterPro" id="IPR002376">
    <property type="entry name" value="Formyl_transf_N"/>
</dbReference>
<dbReference type="InterPro" id="IPR036477">
    <property type="entry name" value="Formyl_transf_N_sf"/>
</dbReference>
<dbReference type="InterPro" id="IPR040660">
    <property type="entry name" value="N_formyltrans_C"/>
</dbReference>
<dbReference type="NCBIfam" id="NF005755">
    <property type="entry name" value="PRK07579.1"/>
    <property type="match status" value="1"/>
</dbReference>
<dbReference type="PANTHER" id="PTHR11138">
    <property type="entry name" value="METHIONYL-TRNA FORMYLTRANSFERASE"/>
    <property type="match status" value="1"/>
</dbReference>
<dbReference type="PANTHER" id="PTHR11138:SF5">
    <property type="entry name" value="METHIONYL-TRNA FORMYLTRANSFERASE, MITOCHONDRIAL"/>
    <property type="match status" value="1"/>
</dbReference>
<dbReference type="Pfam" id="PF00551">
    <property type="entry name" value="Formyl_trans_N"/>
    <property type="match status" value="1"/>
</dbReference>
<dbReference type="Pfam" id="PF18216">
    <property type="entry name" value="N_formyltrans_C"/>
    <property type="match status" value="1"/>
</dbReference>
<dbReference type="SUPFAM" id="SSF53328">
    <property type="entry name" value="Formyltransferase"/>
    <property type="match status" value="1"/>
</dbReference>